<name>SSRP_BACCR</name>
<accession>Q815L5</accession>
<evidence type="ECO:0000255" key="1">
    <source>
        <dbReference type="HAMAP-Rule" id="MF_00023"/>
    </source>
</evidence>
<comment type="function">
    <text evidence="1">Required for rescue of stalled ribosomes mediated by trans-translation. Binds to transfer-messenger RNA (tmRNA), required for stable association of tmRNA with ribosomes. tmRNA and SmpB together mimic tRNA shape, replacing the anticodon stem-loop with SmpB. tmRNA is encoded by the ssrA gene; the 2 termini fold to resemble tRNA(Ala) and it encodes a 'tag peptide', a short internal open reading frame. During trans-translation Ala-aminoacylated tmRNA acts like a tRNA, entering the A-site of stalled ribosomes, displacing the stalled mRNA. The ribosome then switches to translate the ORF on the tmRNA; the nascent peptide is terminated with the 'tag peptide' encoded by the tmRNA and targeted for degradation. The ribosome is freed to recommence translation, which seems to be the essential function of trans-translation.</text>
</comment>
<comment type="subcellular location">
    <subcellularLocation>
        <location evidence="1">Cytoplasm</location>
    </subcellularLocation>
    <text evidence="1">The tmRNA-SmpB complex associates with stalled 70S ribosomes.</text>
</comment>
<comment type="similarity">
    <text evidence="1">Belongs to the SmpB family.</text>
</comment>
<proteinExistence type="inferred from homology"/>
<keyword id="KW-0963">Cytoplasm</keyword>
<keyword id="KW-1185">Reference proteome</keyword>
<keyword id="KW-0694">RNA-binding</keyword>
<gene>
    <name evidence="1" type="primary">smpB</name>
    <name type="ordered locus">BC_5128</name>
</gene>
<dbReference type="EMBL" id="AE016877">
    <property type="protein sequence ID" value="AAP11997.1"/>
    <property type="molecule type" value="Genomic_DNA"/>
</dbReference>
<dbReference type="RefSeq" id="NP_834796.1">
    <property type="nucleotide sequence ID" value="NC_004722.1"/>
</dbReference>
<dbReference type="RefSeq" id="WP_001123919.1">
    <property type="nucleotide sequence ID" value="NZ_CP138336.1"/>
</dbReference>
<dbReference type="SMR" id="Q815L5"/>
<dbReference type="STRING" id="226900.BC_5128"/>
<dbReference type="KEGG" id="bce:BC5128"/>
<dbReference type="PATRIC" id="fig|226900.8.peg.5285"/>
<dbReference type="HOGENOM" id="CLU_108953_0_0_9"/>
<dbReference type="OrthoDB" id="9805462at2"/>
<dbReference type="Proteomes" id="UP000001417">
    <property type="component" value="Chromosome"/>
</dbReference>
<dbReference type="GO" id="GO:0005829">
    <property type="term" value="C:cytosol"/>
    <property type="evidence" value="ECO:0000318"/>
    <property type="project" value="GO_Central"/>
</dbReference>
<dbReference type="GO" id="GO:0003723">
    <property type="term" value="F:RNA binding"/>
    <property type="evidence" value="ECO:0000318"/>
    <property type="project" value="GO_Central"/>
</dbReference>
<dbReference type="GO" id="GO:0070929">
    <property type="term" value="P:trans-translation"/>
    <property type="evidence" value="ECO:0007669"/>
    <property type="project" value="UniProtKB-UniRule"/>
</dbReference>
<dbReference type="CDD" id="cd09294">
    <property type="entry name" value="SmpB"/>
    <property type="match status" value="1"/>
</dbReference>
<dbReference type="Gene3D" id="2.40.280.10">
    <property type="match status" value="1"/>
</dbReference>
<dbReference type="HAMAP" id="MF_00023">
    <property type="entry name" value="SmpB"/>
    <property type="match status" value="1"/>
</dbReference>
<dbReference type="InterPro" id="IPR023620">
    <property type="entry name" value="SmpB"/>
</dbReference>
<dbReference type="InterPro" id="IPR000037">
    <property type="entry name" value="SsrA-bd_prot"/>
</dbReference>
<dbReference type="InterPro" id="IPR020081">
    <property type="entry name" value="SsrA-bd_prot_CS"/>
</dbReference>
<dbReference type="NCBIfam" id="NF003843">
    <property type="entry name" value="PRK05422.1"/>
    <property type="match status" value="1"/>
</dbReference>
<dbReference type="NCBIfam" id="TIGR00086">
    <property type="entry name" value="smpB"/>
    <property type="match status" value="1"/>
</dbReference>
<dbReference type="PANTHER" id="PTHR30308:SF2">
    <property type="entry name" value="SSRA-BINDING PROTEIN"/>
    <property type="match status" value="1"/>
</dbReference>
<dbReference type="PANTHER" id="PTHR30308">
    <property type="entry name" value="TMRNA-BINDING COMPONENT OF TRANS-TRANSLATION TAGGING COMPLEX"/>
    <property type="match status" value="1"/>
</dbReference>
<dbReference type="Pfam" id="PF01668">
    <property type="entry name" value="SmpB"/>
    <property type="match status" value="1"/>
</dbReference>
<dbReference type="SUPFAM" id="SSF74982">
    <property type="entry name" value="Small protein B (SmpB)"/>
    <property type="match status" value="1"/>
</dbReference>
<dbReference type="PROSITE" id="PS01317">
    <property type="entry name" value="SSRP"/>
    <property type="match status" value="1"/>
</dbReference>
<protein>
    <recommendedName>
        <fullName evidence="1">SsrA-binding protein</fullName>
    </recommendedName>
    <alternativeName>
        <fullName evidence="1">Small protein B</fullName>
    </alternativeName>
</protein>
<feature type="chain" id="PRO_0000102899" description="SsrA-binding protein">
    <location>
        <begin position="1"/>
        <end position="155"/>
    </location>
</feature>
<organism>
    <name type="scientific">Bacillus cereus (strain ATCC 14579 / DSM 31 / CCUG 7414 / JCM 2152 / NBRC 15305 / NCIMB 9373 / NCTC 2599 / NRRL B-3711)</name>
    <dbReference type="NCBI Taxonomy" id="226900"/>
    <lineage>
        <taxon>Bacteria</taxon>
        <taxon>Bacillati</taxon>
        <taxon>Bacillota</taxon>
        <taxon>Bacilli</taxon>
        <taxon>Bacillales</taxon>
        <taxon>Bacillaceae</taxon>
        <taxon>Bacillus</taxon>
        <taxon>Bacillus cereus group</taxon>
    </lineage>
</organism>
<sequence length="155" mass="17887">MPKGTGKVIAQNKKAFHDYFIEETYEAGLVLQGTEIKSIRAGRVNLKDAFARVHNGEVWVHNMHINTYEQGNRFNHDPLRTRKLLLHKKEIDKLAGAAKETGYALVPLRIYLKNGFAKMALGLAKGKKQYDKRHDLKEKEAKREIARAFRDRQKM</sequence>
<reference key="1">
    <citation type="journal article" date="2003" name="Nature">
        <title>Genome sequence of Bacillus cereus and comparative analysis with Bacillus anthracis.</title>
        <authorList>
            <person name="Ivanova N."/>
            <person name="Sorokin A."/>
            <person name="Anderson I."/>
            <person name="Galleron N."/>
            <person name="Candelon B."/>
            <person name="Kapatral V."/>
            <person name="Bhattacharyya A."/>
            <person name="Reznik G."/>
            <person name="Mikhailova N."/>
            <person name="Lapidus A."/>
            <person name="Chu L."/>
            <person name="Mazur M."/>
            <person name="Goltsman E."/>
            <person name="Larsen N."/>
            <person name="D'Souza M."/>
            <person name="Walunas T."/>
            <person name="Grechkin Y."/>
            <person name="Pusch G."/>
            <person name="Haselkorn R."/>
            <person name="Fonstein M."/>
            <person name="Ehrlich S.D."/>
            <person name="Overbeek R."/>
            <person name="Kyrpides N.C."/>
        </authorList>
    </citation>
    <scope>NUCLEOTIDE SEQUENCE [LARGE SCALE GENOMIC DNA]</scope>
    <source>
        <strain>ATCC 14579 / DSM 31 / CCUG 7414 / JCM 2152 / NBRC 15305 / NCIMB 9373 / NCTC 2599 / NRRL B-3711</strain>
    </source>
</reference>